<evidence type="ECO:0000255" key="1">
    <source>
        <dbReference type="HAMAP-Rule" id="MF_00144"/>
    </source>
</evidence>
<gene>
    <name evidence="1" type="primary">mnmA2</name>
    <name type="ordered locus">BVU_0999</name>
</gene>
<keyword id="KW-0067">ATP-binding</keyword>
<keyword id="KW-0963">Cytoplasm</keyword>
<keyword id="KW-1015">Disulfide bond</keyword>
<keyword id="KW-0547">Nucleotide-binding</keyword>
<keyword id="KW-0694">RNA-binding</keyword>
<keyword id="KW-0808">Transferase</keyword>
<keyword id="KW-0819">tRNA processing</keyword>
<keyword id="KW-0820">tRNA-binding</keyword>
<dbReference type="EC" id="2.8.1.13" evidence="1"/>
<dbReference type="EMBL" id="CP000139">
    <property type="protein sequence ID" value="ABR38692.1"/>
    <property type="molecule type" value="Genomic_DNA"/>
</dbReference>
<dbReference type="RefSeq" id="WP_011964996.1">
    <property type="nucleotide sequence ID" value="NC_009614.1"/>
</dbReference>
<dbReference type="SMR" id="A6KZ28"/>
<dbReference type="STRING" id="435590.BVU_0999"/>
<dbReference type="PaxDb" id="435590-BVU_0999"/>
<dbReference type="DNASU" id="5301966"/>
<dbReference type="GeneID" id="5301966"/>
<dbReference type="KEGG" id="bvu:BVU_0999"/>
<dbReference type="PATRIC" id="fig|435590.9.peg.1031"/>
<dbReference type="eggNOG" id="COG0482">
    <property type="taxonomic scope" value="Bacteria"/>
</dbReference>
<dbReference type="HOGENOM" id="CLU_035188_0_0_10"/>
<dbReference type="BioCyc" id="BVUL435590:G1G59-1044-MONOMER"/>
<dbReference type="Proteomes" id="UP000002861">
    <property type="component" value="Chromosome"/>
</dbReference>
<dbReference type="GO" id="GO:0005737">
    <property type="term" value="C:cytoplasm"/>
    <property type="evidence" value="ECO:0007669"/>
    <property type="project" value="UniProtKB-SubCell"/>
</dbReference>
<dbReference type="GO" id="GO:0005524">
    <property type="term" value="F:ATP binding"/>
    <property type="evidence" value="ECO:0007669"/>
    <property type="project" value="UniProtKB-KW"/>
</dbReference>
<dbReference type="GO" id="GO:0000049">
    <property type="term" value="F:tRNA binding"/>
    <property type="evidence" value="ECO:0007669"/>
    <property type="project" value="UniProtKB-KW"/>
</dbReference>
<dbReference type="GO" id="GO:0103016">
    <property type="term" value="F:tRNA-uridine 2-sulfurtransferase activity"/>
    <property type="evidence" value="ECO:0007669"/>
    <property type="project" value="UniProtKB-EC"/>
</dbReference>
<dbReference type="GO" id="GO:0002143">
    <property type="term" value="P:tRNA wobble position uridine thiolation"/>
    <property type="evidence" value="ECO:0007669"/>
    <property type="project" value="TreeGrafter"/>
</dbReference>
<dbReference type="CDD" id="cd01998">
    <property type="entry name" value="MnmA_TRMU-like"/>
    <property type="match status" value="1"/>
</dbReference>
<dbReference type="Gene3D" id="2.30.30.280">
    <property type="entry name" value="Adenine nucleotide alpha hydrolases-like domains"/>
    <property type="match status" value="1"/>
</dbReference>
<dbReference type="Gene3D" id="3.40.50.620">
    <property type="entry name" value="HUPs"/>
    <property type="match status" value="1"/>
</dbReference>
<dbReference type="Gene3D" id="2.40.30.10">
    <property type="entry name" value="Translation factors"/>
    <property type="match status" value="1"/>
</dbReference>
<dbReference type="HAMAP" id="MF_00144">
    <property type="entry name" value="tRNA_thiouridyl_MnmA"/>
    <property type="match status" value="1"/>
</dbReference>
<dbReference type="InterPro" id="IPR004506">
    <property type="entry name" value="MnmA-like"/>
</dbReference>
<dbReference type="InterPro" id="IPR046885">
    <property type="entry name" value="MnmA-like_C"/>
</dbReference>
<dbReference type="InterPro" id="IPR046884">
    <property type="entry name" value="MnmA-like_central"/>
</dbReference>
<dbReference type="InterPro" id="IPR023382">
    <property type="entry name" value="MnmA-like_central_sf"/>
</dbReference>
<dbReference type="InterPro" id="IPR014729">
    <property type="entry name" value="Rossmann-like_a/b/a_fold"/>
</dbReference>
<dbReference type="NCBIfam" id="NF001138">
    <property type="entry name" value="PRK00143.1"/>
    <property type="match status" value="1"/>
</dbReference>
<dbReference type="NCBIfam" id="NF011259">
    <property type="entry name" value="PRK14665.1"/>
    <property type="match status" value="1"/>
</dbReference>
<dbReference type="NCBIfam" id="TIGR00420">
    <property type="entry name" value="trmU"/>
    <property type="match status" value="1"/>
</dbReference>
<dbReference type="PANTHER" id="PTHR11933:SF5">
    <property type="entry name" value="MITOCHONDRIAL TRNA-SPECIFIC 2-THIOURIDYLASE 1"/>
    <property type="match status" value="1"/>
</dbReference>
<dbReference type="PANTHER" id="PTHR11933">
    <property type="entry name" value="TRNA 5-METHYLAMINOMETHYL-2-THIOURIDYLATE -METHYLTRANSFERASE"/>
    <property type="match status" value="1"/>
</dbReference>
<dbReference type="Pfam" id="PF03054">
    <property type="entry name" value="tRNA_Me_trans"/>
    <property type="match status" value="1"/>
</dbReference>
<dbReference type="Pfam" id="PF20258">
    <property type="entry name" value="tRNA_Me_trans_C"/>
    <property type="match status" value="1"/>
</dbReference>
<dbReference type="Pfam" id="PF20259">
    <property type="entry name" value="tRNA_Me_trans_M"/>
    <property type="match status" value="1"/>
</dbReference>
<dbReference type="SUPFAM" id="SSF52402">
    <property type="entry name" value="Adenine nucleotide alpha hydrolases-like"/>
    <property type="match status" value="1"/>
</dbReference>
<sequence length="351" mass="40164">MRETESNNKVLLGMSGGTDSSVAALLLQDAGYEVTGITFRFYEKENDTEYLEDARALCERLNIPHLTYDVRDTFRKTIIDYFINEYMAGHTPVPCTLCNNYLKWPLLKKISDEMGIYHFATGHYVRRRFINGCYHITTGVDPDKDQSFFLWGLPQEILQRMLLPMGNLTKARVREIAAERGFLKAAHKRDSLGVCFCPMDYRTFLHKELPEGSILPGKFFDEMGNFIARHKGYPFYTIGQRRGLGIDLNRAVFVKEIIPAENKVILSDLKALEKTEMRLKEWHITNPALLLNKDDIIVKIRYRKQANRCTVTLQPDNTLHVQLHEPLTAIAPGQAAAFYRDDVVLGGGIII</sequence>
<accession>A6KZ28</accession>
<feature type="chain" id="PRO_0000349531" description="tRNA-specific 2-thiouridylase MnmA 2">
    <location>
        <begin position="1"/>
        <end position="351"/>
    </location>
</feature>
<feature type="region of interest" description="Interaction with tRNA" evidence="1">
    <location>
        <begin position="144"/>
        <end position="146"/>
    </location>
</feature>
<feature type="region of interest" description="Interaction with tRNA" evidence="1">
    <location>
        <begin position="301"/>
        <end position="302"/>
    </location>
</feature>
<feature type="active site" description="Nucleophile" evidence="1">
    <location>
        <position position="98"/>
    </location>
</feature>
<feature type="active site" description="Cysteine persulfide intermediate" evidence="1">
    <location>
        <position position="195"/>
    </location>
</feature>
<feature type="binding site" evidence="1">
    <location>
        <begin position="13"/>
        <end position="20"/>
    </location>
    <ligand>
        <name>ATP</name>
        <dbReference type="ChEBI" id="CHEBI:30616"/>
    </ligand>
</feature>
<feature type="binding site" evidence="1">
    <location>
        <position position="39"/>
    </location>
    <ligand>
        <name>ATP</name>
        <dbReference type="ChEBI" id="CHEBI:30616"/>
    </ligand>
</feature>
<feature type="binding site" evidence="1">
    <location>
        <position position="122"/>
    </location>
    <ligand>
        <name>ATP</name>
        <dbReference type="ChEBI" id="CHEBI:30616"/>
    </ligand>
</feature>
<feature type="site" description="Interaction with tRNA" evidence="1">
    <location>
        <position position="123"/>
    </location>
</feature>
<feature type="site" description="Interaction with tRNA" evidence="1">
    <location>
        <position position="334"/>
    </location>
</feature>
<feature type="disulfide bond" description="Alternate" evidence="1">
    <location>
        <begin position="98"/>
        <end position="195"/>
    </location>
</feature>
<name>MNMA2_PHOV8</name>
<proteinExistence type="inferred from homology"/>
<protein>
    <recommendedName>
        <fullName evidence="1">tRNA-specific 2-thiouridylase MnmA 2</fullName>
        <ecNumber evidence="1">2.8.1.13</ecNumber>
    </recommendedName>
</protein>
<comment type="function">
    <text evidence="1">Catalyzes the 2-thiolation of uridine at the wobble position (U34) of tRNA, leading to the formation of s(2)U34.</text>
</comment>
<comment type="catalytic activity">
    <reaction evidence="1">
        <text>S-sulfanyl-L-cysteinyl-[protein] + uridine(34) in tRNA + AH2 + ATP = 2-thiouridine(34) in tRNA + L-cysteinyl-[protein] + A + AMP + diphosphate + H(+)</text>
        <dbReference type="Rhea" id="RHEA:47032"/>
        <dbReference type="Rhea" id="RHEA-COMP:10131"/>
        <dbReference type="Rhea" id="RHEA-COMP:11726"/>
        <dbReference type="Rhea" id="RHEA-COMP:11727"/>
        <dbReference type="Rhea" id="RHEA-COMP:11728"/>
        <dbReference type="ChEBI" id="CHEBI:13193"/>
        <dbReference type="ChEBI" id="CHEBI:15378"/>
        <dbReference type="ChEBI" id="CHEBI:17499"/>
        <dbReference type="ChEBI" id="CHEBI:29950"/>
        <dbReference type="ChEBI" id="CHEBI:30616"/>
        <dbReference type="ChEBI" id="CHEBI:33019"/>
        <dbReference type="ChEBI" id="CHEBI:61963"/>
        <dbReference type="ChEBI" id="CHEBI:65315"/>
        <dbReference type="ChEBI" id="CHEBI:87170"/>
        <dbReference type="ChEBI" id="CHEBI:456215"/>
        <dbReference type="EC" id="2.8.1.13"/>
    </reaction>
</comment>
<comment type="subcellular location">
    <subcellularLocation>
        <location evidence="1">Cytoplasm</location>
    </subcellularLocation>
</comment>
<comment type="similarity">
    <text evidence="1">Belongs to the MnmA/TRMU family.</text>
</comment>
<organism>
    <name type="scientific">Phocaeicola vulgatus (strain ATCC 8482 / DSM 1447 / JCM 5826 / CCUG 4940 / NBRC 14291 / NCTC 11154)</name>
    <name type="common">Bacteroides vulgatus</name>
    <dbReference type="NCBI Taxonomy" id="435590"/>
    <lineage>
        <taxon>Bacteria</taxon>
        <taxon>Pseudomonadati</taxon>
        <taxon>Bacteroidota</taxon>
        <taxon>Bacteroidia</taxon>
        <taxon>Bacteroidales</taxon>
        <taxon>Bacteroidaceae</taxon>
        <taxon>Phocaeicola</taxon>
    </lineage>
</organism>
<reference key="1">
    <citation type="journal article" date="2007" name="PLoS Biol.">
        <title>Evolution of symbiotic bacteria in the distal human intestine.</title>
        <authorList>
            <person name="Xu J."/>
            <person name="Mahowald M.A."/>
            <person name="Ley R.E."/>
            <person name="Lozupone C.A."/>
            <person name="Hamady M."/>
            <person name="Martens E.C."/>
            <person name="Henrissat B."/>
            <person name="Coutinho P.M."/>
            <person name="Minx P."/>
            <person name="Latreille P."/>
            <person name="Cordum H."/>
            <person name="Van Brunt A."/>
            <person name="Kim K."/>
            <person name="Fulton R.S."/>
            <person name="Fulton L.A."/>
            <person name="Clifton S.W."/>
            <person name="Wilson R.K."/>
            <person name="Knight R.D."/>
            <person name="Gordon J.I."/>
        </authorList>
    </citation>
    <scope>NUCLEOTIDE SEQUENCE [LARGE SCALE GENOMIC DNA]</scope>
    <source>
        <strain>ATCC 8482 / DSM 1447 / JCM 5826 / CCUG 4940 / NBRC 14291 / NCTC 11154</strain>
    </source>
</reference>